<accession>Q6QGD5</accession>
<sequence>MGFKSWITEKLNPGQRIIRDMEPVSHRTNRKPFTTGQAYSKIEILNRTANMVIDSAAECSYTVGDKYNIVTYANGVKTKTLDTLLNVRPNPFMDISTFRRLVVTDLLFEGCAYIYWDGTSLYHVPAALMQVEADANKFIKKFIFNNQINYRVDEIIFIKDNSYVCGTNSQISGQSRVATVIDSLEKRSKMLNFKEKFLDNGTVIGLILETDEILNKKLRERKQEELQLDYNPSTGQSSVLILDGGMKAKPYSQISSFKDLDFKEDIEGFNKSICLAFGVPQVLLDGGNNANIRPNIELFYYMTIIPMLNKLTSSLTFFFGYKITPNTKEVAALTPDKEAEAKHLTSLVNNGIITGNEARSELNLEPLDDEQMNKIRIPANVAGSATGVSGQEGGRPKGSTEGD</sequence>
<gene>
    <name type="ORF">ORF141</name>
    <name evidence="7" type="ORF">T5.152</name>
    <name evidence="8" type="ORF">T5p148</name>
</gene>
<evidence type="ECO:0000250" key="1">
    <source>
        <dbReference type="UniProtKB" id="P25480"/>
    </source>
</evidence>
<evidence type="ECO:0000256" key="2">
    <source>
        <dbReference type="SAM" id="MobiDB-lite"/>
    </source>
</evidence>
<evidence type="ECO:0000269" key="3">
    <source>
    </source>
</evidence>
<evidence type="ECO:0000269" key="4">
    <source>
    </source>
</evidence>
<evidence type="ECO:0000303" key="5">
    <source>
    </source>
</evidence>
<evidence type="ECO:0000305" key="6"/>
<evidence type="ECO:0000312" key="7">
    <source>
        <dbReference type="EMBL" id="AAS77191.1"/>
    </source>
</evidence>
<evidence type="ECO:0000312" key="8">
    <source>
        <dbReference type="EMBL" id="AAU05287.1"/>
    </source>
</evidence>
<evidence type="ECO:0000312" key="9">
    <source>
        <dbReference type="EMBL" id="AAX12078.1"/>
    </source>
</evidence>
<keyword id="KW-0002">3D-structure</keyword>
<keyword id="KW-0167">Capsid protein</keyword>
<keyword id="KW-0903">Direct protein sequencing</keyword>
<keyword id="KW-0426">Late protein</keyword>
<keyword id="KW-1185">Reference proteome</keyword>
<keyword id="KW-0118">Viral capsid assembly</keyword>
<keyword id="KW-1171">Viral genome ejection through host cell envelope</keyword>
<keyword id="KW-0231">Viral genome packaging</keyword>
<keyword id="KW-1243">Viral long flexible tail ejection system</keyword>
<keyword id="KW-1162">Viral penetration into host cytoplasm</keyword>
<keyword id="KW-1188">Viral release from host cell</keyword>
<keyword id="KW-0946">Virion</keyword>
<keyword id="KW-1160">Virus entry into host cell</keyword>
<comment type="function">
    <text evidence="1 4">Forms the portal vertex of the capsid and plays a role in governing correct capsid geometry (PubMed:26616586). This portal plays critical roles in capsid assembly, genome packaging, head completion protein attachment, and genome ejection (By similarity). The portal protein multimerizes as a single ring-shaped homododecamer arranged around a central channel (By similarity). Binds to the terminase subunits to form the packaging machine (By similarity).</text>
</comment>
<comment type="subunit">
    <text evidence="1 4">Homododecamer (By similarity). Interacts with the major capsid protein (Probable).</text>
</comment>
<comment type="subcellular location">
    <subcellularLocation>
        <location evidence="3">Virion</location>
    </subcellularLocation>
    <text evidence="3">Forms the portal complex located at one vertex of the capsid.</text>
</comment>
<comment type="similarity">
    <text evidence="6">Belongs to the phage portal family.</text>
</comment>
<name>PORTL_BPT5</name>
<organism>
    <name type="scientific">Escherichia phage T5</name>
    <name type="common">Enterobacteria phage T5</name>
    <dbReference type="NCBI Taxonomy" id="2695836"/>
    <lineage>
        <taxon>Viruses</taxon>
        <taxon>Duplodnaviria</taxon>
        <taxon>Heunggongvirae</taxon>
        <taxon>Uroviricota</taxon>
        <taxon>Caudoviricetes</taxon>
        <taxon>Demerecviridae</taxon>
        <taxon>Markadamsvirinae</taxon>
        <taxon>Tequintavirus</taxon>
        <taxon>Tequintavirus T5</taxon>
    </lineage>
</organism>
<organismHost>
    <name type="scientific">Escherichia coli</name>
    <dbReference type="NCBI Taxonomy" id="562"/>
</organismHost>
<proteinExistence type="evidence at protein level"/>
<feature type="propeptide" id="PRO_0000435560" evidence="3">
    <location>
        <begin position="1"/>
        <end position="10"/>
    </location>
</feature>
<feature type="chain" id="PRO_0000432540" description="Portal protein">
    <location>
        <begin position="11"/>
        <end position="403"/>
    </location>
</feature>
<feature type="region of interest" description="Disordered" evidence="2">
    <location>
        <begin position="379"/>
        <end position="403"/>
    </location>
</feature>
<feature type="compositionally biased region" description="Basic and acidic residues" evidence="2">
    <location>
        <begin position="394"/>
        <end position="403"/>
    </location>
</feature>
<feature type="site" description="Cleavage; by the prohead protease" evidence="3">
    <location>
        <begin position="10"/>
        <end position="11"/>
    </location>
</feature>
<protein>
    <recommendedName>
        <fullName evidence="5">Portal protein</fullName>
    </recommendedName>
    <alternativeName>
        <fullName evidence="5">Capsid protein pb7</fullName>
    </alternativeName>
</protein>
<reference key="1">
    <citation type="submission" date="2004-01" db="EMBL/GenBank/DDBJ databases">
        <title>Bacteriophage T5 complete genome.</title>
        <authorList>
            <person name="Ksenzenko V.N."/>
            <person name="Kaliman A.V."/>
            <person name="Krutilina A.I."/>
            <person name="Shlyapnikov M.G."/>
        </authorList>
    </citation>
    <scope>NUCLEOTIDE SEQUENCE [LARGE SCALE GENOMIC DNA]</scope>
</reference>
<reference key="2">
    <citation type="journal article" date="2005" name="Virology">
        <title>Complete genome sequence of bacteriophage T5.</title>
        <authorList>
            <person name="Wang J."/>
            <person name="Jiang Y."/>
            <person name="Vincent M."/>
            <person name="Sun Y."/>
            <person name="Yu H."/>
            <person name="Wang J."/>
            <person name="Bao Q."/>
            <person name="Kong H."/>
            <person name="Hu S."/>
        </authorList>
    </citation>
    <scope>NUCLEOTIDE SEQUENCE [LARGE SCALE GENOMIC DNA]</scope>
    <scope>INDUCTION</scope>
    <source>
        <strain evidence="9">ATCC 11303-B5</strain>
    </source>
</reference>
<reference key="3">
    <citation type="journal article" date="2014" name="J. Virol.">
        <title>Insights into bacteriophage T5 structure from analysis of its morphogenesis genes and protein components.</title>
        <authorList>
            <person name="Zivanovic Y."/>
            <person name="Confalonieri F."/>
            <person name="Ponchon L."/>
            <person name="Lurz R."/>
            <person name="Chami M."/>
            <person name="Flayhan A."/>
            <person name="Renouard M."/>
            <person name="Huet A."/>
            <person name="Decottignies P."/>
            <person name="Davidson A.R."/>
            <person name="Breyton C."/>
            <person name="Boulanger P."/>
        </authorList>
    </citation>
    <scope>NUCLEOTIDE SEQUENCE [LARGE SCALE GENOMIC DNA]</scope>
    <scope>PARTIAL PROTEIN SEQUENCE</scope>
    <scope>PROTEOLYTIC CLEAVAGE</scope>
    <scope>SUBCELLULAR LOCATION</scope>
    <source>
        <strain evidence="8">St0 deletion mutant</strain>
    </source>
</reference>
<reference key="4">
    <citation type="journal article" date="2016" name="J. Mol. Biol.">
        <title>Correct assembly of the bacteriophage T5 procapsid requires both the maturation protease and the portal complex.</title>
        <authorList>
            <person name="Huet A."/>
            <person name="Duda R.L."/>
            <person name="Hendrix R.W."/>
            <person name="Boulanger P."/>
            <person name="Conway J.F."/>
        </authorList>
    </citation>
    <scope>STRUCTURE BY ELECTRON MICROSCOPY (30.0 ANGSTROMS) OF THE CAPSID</scope>
    <scope>FUNCTION</scope>
    <scope>INTERACTION WITH THE MAJOR CAPSID PROTEIN</scope>
</reference>
<dbReference type="EMBL" id="AY543070">
    <property type="protein sequence ID" value="AAS77191.1"/>
    <property type="molecule type" value="Genomic_DNA"/>
</dbReference>
<dbReference type="EMBL" id="AY692264">
    <property type="protein sequence ID" value="AAU05287.1"/>
    <property type="molecule type" value="Genomic_DNA"/>
</dbReference>
<dbReference type="EMBL" id="AY587007">
    <property type="protein sequence ID" value="AAX12078.1"/>
    <property type="molecule type" value="Genomic_DNA"/>
</dbReference>
<dbReference type="RefSeq" id="YP_006980.1">
    <property type="nucleotide sequence ID" value="NC_005859.1"/>
</dbReference>
<dbReference type="PDB" id="9ILP">
    <property type="method" value="EM"/>
    <property type="resolution" value="3.40 A"/>
    <property type="chains" value="A/B/C/D/E/F/G/H/I/J/K/L=1-403"/>
</dbReference>
<dbReference type="PDB" id="9IMV">
    <property type="method" value="EM"/>
    <property type="resolution" value="4.00 A"/>
    <property type="chains" value="A/B/C/D/E/F/G/H/I/J/K/L=1-403"/>
</dbReference>
<dbReference type="PDBsum" id="9ILP"/>
<dbReference type="PDBsum" id="9IMV"/>
<dbReference type="EMDB" id="EMD-60672"/>
<dbReference type="EMDB" id="EMD-60695"/>
<dbReference type="SMR" id="Q6QGD5"/>
<dbReference type="TCDB" id="1.W.2.1.1">
    <property type="family name" value="the phage portal protein 2 (ppp2) family"/>
</dbReference>
<dbReference type="GeneID" id="2777676"/>
<dbReference type="KEGG" id="vg:2777676"/>
<dbReference type="Proteomes" id="UP000002107">
    <property type="component" value="Genome"/>
</dbReference>
<dbReference type="Proteomes" id="UP000002141">
    <property type="component" value="Segment"/>
</dbReference>
<dbReference type="Proteomes" id="UP000002503">
    <property type="component" value="Segment"/>
</dbReference>
<dbReference type="GO" id="GO:0030430">
    <property type="term" value="C:host cell cytoplasm"/>
    <property type="evidence" value="ECO:0007669"/>
    <property type="project" value="GOC"/>
</dbReference>
<dbReference type="GO" id="GO:0019028">
    <property type="term" value="C:viral capsid"/>
    <property type="evidence" value="ECO:0007669"/>
    <property type="project" value="UniProtKB-KW"/>
</dbReference>
<dbReference type="GO" id="GO:0039710">
    <property type="term" value="P:cytoplasmic icosahedral capsid assembly"/>
    <property type="evidence" value="ECO:0000314"/>
    <property type="project" value="CACAO"/>
</dbReference>
<dbReference type="GO" id="GO:0099001">
    <property type="term" value="P:symbiont genome ejection through host cell envelope, long flexible tail mechanism"/>
    <property type="evidence" value="ECO:0007669"/>
    <property type="project" value="UniProtKB-KW"/>
</dbReference>
<dbReference type="InterPro" id="IPR006944">
    <property type="entry name" value="Phage/GTA_portal"/>
</dbReference>
<dbReference type="Pfam" id="PF04860">
    <property type="entry name" value="Phage_portal"/>
    <property type="match status" value="1"/>
</dbReference>